<reference key="1">
    <citation type="submission" date="2007-11" db="EMBL/GenBank/DDBJ databases">
        <authorList>
            <consortium name="The Salmonella enterica serovar Arizonae Genome Sequencing Project"/>
            <person name="McClelland M."/>
            <person name="Sanderson E.K."/>
            <person name="Porwollik S."/>
            <person name="Spieth J."/>
            <person name="Clifton W.S."/>
            <person name="Fulton R."/>
            <person name="Chunyan W."/>
            <person name="Wollam A."/>
            <person name="Shah N."/>
            <person name="Pepin K."/>
            <person name="Bhonagiri V."/>
            <person name="Nash W."/>
            <person name="Johnson M."/>
            <person name="Thiruvilangam P."/>
            <person name="Wilson R."/>
        </authorList>
    </citation>
    <scope>NUCLEOTIDE SEQUENCE [LARGE SCALE GENOMIC DNA]</scope>
    <source>
        <strain>ATCC BAA-731 / CDC346-86 / RSK2980</strain>
    </source>
</reference>
<comment type="function">
    <text evidence="1">Required for the expression of anaerobic nitric oxide (NO) reductase, acts as a transcriptional activator for at least the norVW operon. Activation also requires sigma-54.</text>
</comment>
<comment type="pathway">
    <text evidence="1">Nitrogen metabolism; nitric oxide reduction.</text>
</comment>
<comment type="sequence caution" evidence="2">
    <conflict type="erroneous initiation">
        <sequence resource="EMBL-CDS" id="ABX20085"/>
    </conflict>
</comment>
<dbReference type="EMBL" id="CP000880">
    <property type="protein sequence ID" value="ABX20085.1"/>
    <property type="status" value="ALT_INIT"/>
    <property type="molecule type" value="Genomic_DNA"/>
</dbReference>
<dbReference type="SMR" id="A9MFX7"/>
<dbReference type="STRING" id="41514.SARI_00132"/>
<dbReference type="KEGG" id="ses:SARI_00132"/>
<dbReference type="HOGENOM" id="CLU_000445_125_2_6"/>
<dbReference type="UniPathway" id="UPA00638"/>
<dbReference type="Proteomes" id="UP000002084">
    <property type="component" value="Chromosome"/>
</dbReference>
<dbReference type="GO" id="GO:0005524">
    <property type="term" value="F:ATP binding"/>
    <property type="evidence" value="ECO:0007669"/>
    <property type="project" value="UniProtKB-UniRule"/>
</dbReference>
<dbReference type="GO" id="GO:0016887">
    <property type="term" value="F:ATP hydrolysis activity"/>
    <property type="evidence" value="ECO:0007669"/>
    <property type="project" value="InterPro"/>
</dbReference>
<dbReference type="GO" id="GO:0003677">
    <property type="term" value="F:DNA binding"/>
    <property type="evidence" value="ECO:0007669"/>
    <property type="project" value="UniProtKB-KW"/>
</dbReference>
<dbReference type="GO" id="GO:0003700">
    <property type="term" value="F:DNA-binding transcription factor activity"/>
    <property type="evidence" value="ECO:0007669"/>
    <property type="project" value="UniProtKB-UniRule"/>
</dbReference>
<dbReference type="GO" id="GO:0000160">
    <property type="term" value="P:phosphorelay signal transduction system"/>
    <property type="evidence" value="ECO:0007669"/>
    <property type="project" value="UniProtKB-UniRule"/>
</dbReference>
<dbReference type="CDD" id="cd00009">
    <property type="entry name" value="AAA"/>
    <property type="match status" value="1"/>
</dbReference>
<dbReference type="FunFam" id="1.10.8.60:FF:000045">
    <property type="entry name" value="Anaerobic nitric oxide reductase transcription regulator NorR"/>
    <property type="match status" value="1"/>
</dbReference>
<dbReference type="FunFam" id="3.40.50.300:FF:000006">
    <property type="entry name" value="DNA-binding transcriptional regulator NtrC"/>
    <property type="match status" value="1"/>
</dbReference>
<dbReference type="Gene3D" id="1.10.8.60">
    <property type="match status" value="1"/>
</dbReference>
<dbReference type="Gene3D" id="3.30.450.40">
    <property type="match status" value="1"/>
</dbReference>
<dbReference type="Gene3D" id="1.10.10.60">
    <property type="entry name" value="Homeodomain-like"/>
    <property type="match status" value="1"/>
</dbReference>
<dbReference type="Gene3D" id="3.40.50.300">
    <property type="entry name" value="P-loop containing nucleotide triphosphate hydrolases"/>
    <property type="match status" value="1"/>
</dbReference>
<dbReference type="HAMAP" id="MF_01314">
    <property type="entry name" value="NorR"/>
    <property type="match status" value="1"/>
</dbReference>
<dbReference type="InterPro" id="IPR003593">
    <property type="entry name" value="AAA+_ATPase"/>
</dbReference>
<dbReference type="InterPro" id="IPR003018">
    <property type="entry name" value="GAF"/>
</dbReference>
<dbReference type="InterPro" id="IPR029016">
    <property type="entry name" value="GAF-like_dom_sf"/>
</dbReference>
<dbReference type="InterPro" id="IPR009057">
    <property type="entry name" value="Homeodomain-like_sf"/>
</dbReference>
<dbReference type="InterPro" id="IPR023944">
    <property type="entry name" value="NorR"/>
</dbReference>
<dbReference type="InterPro" id="IPR027417">
    <property type="entry name" value="P-loop_NTPase"/>
</dbReference>
<dbReference type="InterPro" id="IPR002078">
    <property type="entry name" value="Sigma_54_int"/>
</dbReference>
<dbReference type="InterPro" id="IPR025662">
    <property type="entry name" value="Sigma_54_int_dom_ATP-bd_1"/>
</dbReference>
<dbReference type="InterPro" id="IPR025943">
    <property type="entry name" value="Sigma_54_int_dom_ATP-bd_2"/>
</dbReference>
<dbReference type="InterPro" id="IPR025944">
    <property type="entry name" value="Sigma_54_int_dom_CS"/>
</dbReference>
<dbReference type="NCBIfam" id="NF003451">
    <property type="entry name" value="PRK05022.1"/>
    <property type="match status" value="1"/>
</dbReference>
<dbReference type="PANTHER" id="PTHR32071:SF35">
    <property type="entry name" value="ANAEROBIC NITRIC OXIDE REDUCTASE TRANSCRIPTION REGULATOR NORR"/>
    <property type="match status" value="1"/>
</dbReference>
<dbReference type="PANTHER" id="PTHR32071">
    <property type="entry name" value="TRANSCRIPTIONAL REGULATORY PROTEIN"/>
    <property type="match status" value="1"/>
</dbReference>
<dbReference type="Pfam" id="PF01590">
    <property type="entry name" value="GAF"/>
    <property type="match status" value="1"/>
</dbReference>
<dbReference type="Pfam" id="PF00158">
    <property type="entry name" value="Sigma54_activat"/>
    <property type="match status" value="1"/>
</dbReference>
<dbReference type="SMART" id="SM00382">
    <property type="entry name" value="AAA"/>
    <property type="match status" value="1"/>
</dbReference>
<dbReference type="SMART" id="SM00065">
    <property type="entry name" value="GAF"/>
    <property type="match status" value="1"/>
</dbReference>
<dbReference type="SUPFAM" id="SSF55781">
    <property type="entry name" value="GAF domain-like"/>
    <property type="match status" value="1"/>
</dbReference>
<dbReference type="SUPFAM" id="SSF46689">
    <property type="entry name" value="Homeodomain-like"/>
    <property type="match status" value="1"/>
</dbReference>
<dbReference type="SUPFAM" id="SSF52540">
    <property type="entry name" value="P-loop containing nucleoside triphosphate hydrolases"/>
    <property type="match status" value="1"/>
</dbReference>
<dbReference type="PROSITE" id="PS00675">
    <property type="entry name" value="SIGMA54_INTERACT_1"/>
    <property type="match status" value="1"/>
</dbReference>
<dbReference type="PROSITE" id="PS00676">
    <property type="entry name" value="SIGMA54_INTERACT_2"/>
    <property type="match status" value="1"/>
</dbReference>
<dbReference type="PROSITE" id="PS00688">
    <property type="entry name" value="SIGMA54_INTERACT_3"/>
    <property type="match status" value="1"/>
</dbReference>
<dbReference type="PROSITE" id="PS50045">
    <property type="entry name" value="SIGMA54_INTERACT_4"/>
    <property type="match status" value="1"/>
</dbReference>
<gene>
    <name evidence="1" type="primary">norR</name>
    <name type="ordered locus">SARI_00132</name>
</gene>
<evidence type="ECO:0000255" key="1">
    <source>
        <dbReference type="HAMAP-Rule" id="MF_01314"/>
    </source>
</evidence>
<evidence type="ECO:0000305" key="2"/>
<sequence length="506" mass="55398">MSFSVEVLAGIAIELQRGIGHQDRFQRLITTLRQVLACDASALLRYESGQFIPLAIDGLAQDVLGRRFTLEGHPRLEAIARAGDVVRFPADSDLPDPYDGLIPGQESLKVHACVGLPLFAGQNLIGALTFDAMTPAQFEVFSDEELRLIAALAAGALSNALLIEQLESQNMLPRSSAAFEPIKETHMIGLSPAMTQLKKEIEIVASSDLNVLIGGETGTGKELVAKAIHQGSPRAVNPLVYLNCAALPESVAESELFGHVKGAFTGAISNRSGKFEMADNGTLFLDEIGELSLALQAKLLRVLQYGDIQRVGDDRSLRVDVRVLAATNRDLREEVLAGRFRADLFHRLSVFPLFVPPLRERGNDVVLLAGYFCEQCRLRLGLSRVVLSPGARRHLLNYGWPGNVRELEHAIHRAVVLARATRAGDEVILEAQHFALSEDVLPAPPAESFLALPNCRNLRESTENFQRELIRQALAQNHHNWAASARALETDVANLHRLAKRLGLKD</sequence>
<feature type="chain" id="PRO_0000341321" description="Anaerobic nitric oxide reductase transcription regulator NorR">
    <location>
        <begin position="1"/>
        <end position="506"/>
    </location>
</feature>
<feature type="domain" description="Sigma-54 factor interaction" evidence="1">
    <location>
        <begin position="187"/>
        <end position="416"/>
    </location>
</feature>
<feature type="DNA-binding region" description="H-T-H motif" evidence="1">
    <location>
        <begin position="481"/>
        <end position="500"/>
    </location>
</feature>
<feature type="binding site" evidence="1">
    <location>
        <begin position="215"/>
        <end position="222"/>
    </location>
    <ligand>
        <name>ATP</name>
        <dbReference type="ChEBI" id="CHEBI:30616"/>
    </ligand>
</feature>
<feature type="binding site" evidence="1">
    <location>
        <begin position="278"/>
        <end position="287"/>
    </location>
    <ligand>
        <name>ATP</name>
        <dbReference type="ChEBI" id="CHEBI:30616"/>
    </ligand>
</feature>
<feature type="modified residue" description="4-aspartylphosphate" evidence="1">
    <location>
        <position position="57"/>
    </location>
</feature>
<accession>A9MFX7</accession>
<proteinExistence type="inferred from homology"/>
<name>NORR_SALAR</name>
<protein>
    <recommendedName>
        <fullName evidence="1">Anaerobic nitric oxide reductase transcription regulator NorR</fullName>
    </recommendedName>
</protein>
<keyword id="KW-0067">ATP-binding</keyword>
<keyword id="KW-0238">DNA-binding</keyword>
<keyword id="KW-0547">Nucleotide-binding</keyword>
<keyword id="KW-0597">Phosphoprotein</keyword>
<keyword id="KW-1185">Reference proteome</keyword>
<keyword id="KW-0804">Transcription</keyword>
<keyword id="KW-0805">Transcription regulation</keyword>
<organism>
    <name type="scientific">Salmonella arizonae (strain ATCC BAA-731 / CDC346-86 / RSK2980)</name>
    <dbReference type="NCBI Taxonomy" id="41514"/>
    <lineage>
        <taxon>Bacteria</taxon>
        <taxon>Pseudomonadati</taxon>
        <taxon>Pseudomonadota</taxon>
        <taxon>Gammaproteobacteria</taxon>
        <taxon>Enterobacterales</taxon>
        <taxon>Enterobacteriaceae</taxon>
        <taxon>Salmonella</taxon>
    </lineage>
</organism>